<name>VE6_HPV35</name>
<feature type="chain" id="PRO_0000133355" description="Protein E6">
    <location>
        <begin position="1"/>
        <end position="149"/>
    </location>
</feature>
<feature type="zinc finger region" evidence="1">
    <location>
        <begin position="30"/>
        <end position="66"/>
    </location>
</feature>
<feature type="zinc finger region" evidence="1">
    <location>
        <begin position="103"/>
        <end position="139"/>
    </location>
</feature>
<feature type="short sequence motif" description="PDZ-binding domain" evidence="1">
    <location>
        <begin position="147"/>
        <end position="149"/>
    </location>
</feature>
<feature type="strand" evidence="3">
    <location>
        <begin position="146"/>
        <end position="148"/>
    </location>
</feature>
<sequence length="149" mass="18045">MFQDPAERPYKLHDLCNEVEESIHEICLNCVYCKQELQRSEVYDFACYDLCIVYREGQPYGVCMKCLKFYSKISEYRWYRYSVYGETLEKQCNKQLCHLLIRCITCQKPLCPVEKQRHLEEKKRFHNIGGRWTGRCMSCWKPTRRETEV</sequence>
<proteinExistence type="evidence at protein level"/>
<evidence type="ECO:0000255" key="1">
    <source>
        <dbReference type="HAMAP-Rule" id="MF_04006"/>
    </source>
</evidence>
<evidence type="ECO:0000305" key="2"/>
<evidence type="ECO:0007829" key="3">
    <source>
        <dbReference type="PDB" id="7P70"/>
    </source>
</evidence>
<comment type="function">
    <text>This protein may be involved in the oncogenic potential of this virus (associated with cancer of the uterine cervix).</text>
</comment>
<comment type="function">
    <text evidence="1">Plays a major role in the induction and maintenance of cellular transformation. Acts mainly as an oncoprotein by stimulating the destruction of many host cell key regulatory proteins. E6 associates with host UBE3A/E6-AP ubiquitin-protein ligase, and inactivates tumor suppressors TP53 and TP73 by targeting them to the 26S proteasome for degradation. In turn, DNA damage and chromosomal instabilities increase and lead to cell proliferation and cancer development. The complex E6/E6AP targets several other substrates to degradation via the proteasome including host DLG1 or NFX1, a repressor of human telomerase reverse transcriptase (hTERT). The resulting increased expression of hTERT prevents the shortening of telomere length leading to cell immortalization. Other cellular targets including BAK1, Fas-associated death domain-containing protein (FADD) and procaspase 8, are degraded by E6/E6AP causing inhibition of apoptosis. E6 also inhibits immune response by interacting with host IRF3 and TYK2. These interactions prevent IRF3 transcriptional activities and inhibit TYK2-mediated JAK-STAT activation by interferon alpha resulting in inhibition of the interferon signaling pathway.</text>
</comment>
<comment type="subunit">
    <text evidence="1">Forms homodimers. Interacts with ubiquitin-protein ligase UBE3A/E6-AP and thus forms a complex with human TP53. Interacts with human NFX1 and MAGI3. Interacts with human IRF3; this interaction inhibits the establishment of antiviral state. Interacts with human TYK2; this interaction inhibits JAK-STAT activation by interferon alpha. Interacts with host DLG1; this interaction leads to the proteasomal degradation of DLG1.</text>
</comment>
<comment type="interaction">
    <interactant intactId="EBI-11793748">
        <id>P27228</id>
    </interactant>
    <interactant intactId="EBI-357481">
        <id>Q12959</id>
        <label>DLG1</label>
    </interactant>
    <organismsDiffer>true</organismsDiffer>
    <experiments>2</experiments>
</comment>
<comment type="subcellular location">
    <subcellularLocation>
        <location evidence="1">Host cytoplasm</location>
    </subcellularLocation>
    <subcellularLocation>
        <location evidence="1">Host nucleus</location>
    </subcellularLocation>
</comment>
<comment type="miscellaneous">
    <text evidence="1">Belongs to the high risk human alphapapillomavirus family. The cancer-causing human papillomavirus E6 protein has a unique carboxy terminal PDZ domain containing substrate.</text>
</comment>
<comment type="similarity">
    <text evidence="2">Belongs to the papillomaviridae E6 protein family.</text>
</comment>
<organism>
    <name type="scientific">Human papillomavirus 35</name>
    <dbReference type="NCBI Taxonomy" id="10587"/>
    <lineage>
        <taxon>Viruses</taxon>
        <taxon>Monodnaviria</taxon>
        <taxon>Shotokuvirae</taxon>
        <taxon>Cossaviricota</taxon>
        <taxon>Papovaviricetes</taxon>
        <taxon>Zurhausenvirales</taxon>
        <taxon>Papillomaviridae</taxon>
        <taxon>Firstpapillomavirinae</taxon>
        <taxon>Alphapapillomavirus</taxon>
        <taxon>Alphapapillomavirus 9</taxon>
    </lineage>
</organism>
<gene>
    <name evidence="1" type="primary">E6</name>
</gene>
<keyword id="KW-0002">3D-structure</keyword>
<keyword id="KW-0010">Activator</keyword>
<keyword id="KW-0238">DNA-binding</keyword>
<keyword id="KW-0244">Early protein</keyword>
<keyword id="KW-1035">Host cytoplasm</keyword>
<keyword id="KW-1048">Host nucleus</keyword>
<keyword id="KW-0945">Host-virus interaction</keyword>
<keyword id="KW-1090">Inhibition of host innate immune response by virus</keyword>
<keyword id="KW-1092">Inhibition of host IRF3 by virus</keyword>
<keyword id="KW-1113">Inhibition of host RLR pathway by virus</keyword>
<keyword id="KW-0479">Metal-binding</keyword>
<keyword id="KW-1119">Modulation of host cell apoptosis by virus</keyword>
<keyword id="KW-0553">Oncogene</keyword>
<keyword id="KW-1185">Reference proteome</keyword>
<keyword id="KW-0804">Transcription</keyword>
<keyword id="KW-0805">Transcription regulation</keyword>
<keyword id="KW-0899">Viral immunoevasion</keyword>
<keyword id="KW-0862">Zinc</keyword>
<keyword id="KW-0863">Zinc-finger</keyword>
<reference key="1">
    <citation type="journal article" date="1994" name="Curr. Top. Microbiol. Immunol.">
        <title>Primer-directed sequencing of human papillomavirus types.</title>
        <authorList>
            <person name="Delius H."/>
            <person name="Hofmann B."/>
        </authorList>
    </citation>
    <scope>NUCLEOTIDE SEQUENCE [GENOMIC DNA]</scope>
    <source>
        <strain>Isolate 35H</strain>
    </source>
</reference>
<reference key="2">
    <citation type="journal article" date="1992" name="Virology">
        <title>The phylogenetic relationship and complete nucleotide sequence of human papillomavirus type 35.</title>
        <authorList>
            <person name="Marich J.E."/>
            <person name="Pontsler A.V."/>
            <person name="Rice S.M."/>
            <person name="McGraw K.A."/>
            <person name="Dubensky T.W."/>
        </authorList>
    </citation>
    <scope>NUCLEOTIDE SEQUENCE [GENOMIC DNA]</scope>
</reference>
<protein>
    <recommendedName>
        <fullName evidence="1">Protein E6</fullName>
    </recommendedName>
</protein>
<accession>P27228</accession>
<dbReference type="EMBL" id="X74477">
    <property type="protein sequence ID" value="CAA52561.1"/>
    <property type="molecule type" value="Genomic_DNA"/>
</dbReference>
<dbReference type="EMBL" id="M74117">
    <property type="protein sequence ID" value="AAA46966.1"/>
    <property type="molecule type" value="Genomic_DNA"/>
</dbReference>
<dbReference type="PIR" id="E40824">
    <property type="entry name" value="W6WL35"/>
</dbReference>
<dbReference type="PDB" id="7P70">
    <property type="method" value="X-ray"/>
    <property type="resolution" value="2.00 A"/>
    <property type="chains" value="C=141-149"/>
</dbReference>
<dbReference type="PDB" id="7P71">
    <property type="method" value="X-ray"/>
    <property type="resolution" value="2.60 A"/>
    <property type="chains" value="C/D=141-149"/>
</dbReference>
<dbReference type="PDBsum" id="7P70"/>
<dbReference type="PDBsum" id="7P71"/>
<dbReference type="SMR" id="P27228"/>
<dbReference type="IntAct" id="P27228">
    <property type="interactions" value="2"/>
</dbReference>
<dbReference type="MINT" id="P27228"/>
<dbReference type="Proteomes" id="UP000007711">
    <property type="component" value="Segment"/>
</dbReference>
<dbReference type="Proteomes" id="UP000113298">
    <property type="component" value="Genome"/>
</dbReference>
<dbReference type="GO" id="GO:0030430">
    <property type="term" value="C:host cell cytoplasm"/>
    <property type="evidence" value="ECO:0007669"/>
    <property type="project" value="UniProtKB-SubCell"/>
</dbReference>
<dbReference type="GO" id="GO:0042025">
    <property type="term" value="C:host cell nucleus"/>
    <property type="evidence" value="ECO:0007669"/>
    <property type="project" value="UniProtKB-SubCell"/>
</dbReference>
<dbReference type="GO" id="GO:0003677">
    <property type="term" value="F:DNA binding"/>
    <property type="evidence" value="ECO:0007669"/>
    <property type="project" value="UniProtKB-UniRule"/>
</dbReference>
<dbReference type="GO" id="GO:0030165">
    <property type="term" value="F:PDZ domain binding"/>
    <property type="evidence" value="ECO:0007669"/>
    <property type="project" value="UniProtKB-UniRule"/>
</dbReference>
<dbReference type="GO" id="GO:0008270">
    <property type="term" value="F:zinc ion binding"/>
    <property type="evidence" value="ECO:0007669"/>
    <property type="project" value="UniProtKB-KW"/>
</dbReference>
<dbReference type="GO" id="GO:0006351">
    <property type="term" value="P:DNA-templated transcription"/>
    <property type="evidence" value="ECO:0007669"/>
    <property type="project" value="UniProtKB-UniRule"/>
</dbReference>
<dbReference type="GO" id="GO:0006355">
    <property type="term" value="P:regulation of DNA-templated transcription"/>
    <property type="evidence" value="ECO:0007669"/>
    <property type="project" value="UniProtKB-UniRule"/>
</dbReference>
<dbReference type="GO" id="GO:0052150">
    <property type="term" value="P:symbiont-mediated perturbation of host apoptosis"/>
    <property type="evidence" value="ECO:0007669"/>
    <property type="project" value="UniProtKB-KW"/>
</dbReference>
<dbReference type="GO" id="GO:0039648">
    <property type="term" value="P:symbiont-mediated perturbation of host ubiquitin-like protein modification"/>
    <property type="evidence" value="ECO:0007669"/>
    <property type="project" value="UniProtKB-UniRule"/>
</dbReference>
<dbReference type="GO" id="GO:0039548">
    <property type="term" value="P:symbiont-mediated suppression of host cytoplasmic pattern recognition receptor signaling pathway via inhibition of IRF3 activity"/>
    <property type="evidence" value="ECO:0007669"/>
    <property type="project" value="UniProtKB-UniRule"/>
</dbReference>
<dbReference type="GO" id="GO:0039502">
    <property type="term" value="P:symbiont-mediated suppression of host type I interferon-mediated signaling pathway"/>
    <property type="evidence" value="ECO:0007669"/>
    <property type="project" value="UniProtKB-UniRule"/>
</dbReference>
<dbReference type="FunFam" id="3.30.240.40:FF:000001">
    <property type="entry name" value="Protein E6"/>
    <property type="match status" value="1"/>
</dbReference>
<dbReference type="FunFam" id="3.30.240.40:FF:000002">
    <property type="entry name" value="Protein E6"/>
    <property type="match status" value="1"/>
</dbReference>
<dbReference type="Gene3D" id="3.30.240.40">
    <property type="entry name" value="E6 early regulatory protein"/>
    <property type="match status" value="2"/>
</dbReference>
<dbReference type="HAMAP" id="MF_04006">
    <property type="entry name" value="HPV_E6"/>
    <property type="match status" value="1"/>
</dbReference>
<dbReference type="InterPro" id="IPR001334">
    <property type="entry name" value="E6"/>
</dbReference>
<dbReference type="InterPro" id="IPR038575">
    <property type="entry name" value="E6_sf"/>
</dbReference>
<dbReference type="Pfam" id="PF00518">
    <property type="entry name" value="E6"/>
    <property type="match status" value="1"/>
</dbReference>
<dbReference type="SUPFAM" id="SSF161229">
    <property type="entry name" value="E6 C-terminal domain-like"/>
    <property type="match status" value="2"/>
</dbReference>
<organismHost>
    <name type="scientific">Homo sapiens</name>
    <name type="common">Human</name>
    <dbReference type="NCBI Taxonomy" id="9606"/>
</organismHost>